<proteinExistence type="inferred from homology"/>
<comment type="function">
    <text evidence="1">Catalyzes the interconversion of L-alanine and D-alanine. May also act on other amino acids.</text>
</comment>
<comment type="catalytic activity">
    <reaction evidence="1">
        <text>L-alanine = D-alanine</text>
        <dbReference type="Rhea" id="RHEA:20249"/>
        <dbReference type="ChEBI" id="CHEBI:57416"/>
        <dbReference type="ChEBI" id="CHEBI:57972"/>
        <dbReference type="EC" id="5.1.1.1"/>
    </reaction>
</comment>
<comment type="cofactor">
    <cofactor evidence="1">
        <name>pyridoxal 5'-phosphate</name>
        <dbReference type="ChEBI" id="CHEBI:597326"/>
    </cofactor>
</comment>
<comment type="pathway">
    <text evidence="1">Amino-acid biosynthesis; D-alanine biosynthesis; D-alanine from L-alanine: step 1/1.</text>
</comment>
<comment type="similarity">
    <text evidence="1">Belongs to the alanine racemase family.</text>
</comment>
<protein>
    <recommendedName>
        <fullName evidence="1">Alanine racemase</fullName>
        <ecNumber evidence="1">5.1.1.1</ecNumber>
    </recommendedName>
</protein>
<gene>
    <name type="primary">alr</name>
    <name type="ordered locus">Sbal195_0747</name>
</gene>
<organism>
    <name type="scientific">Shewanella baltica (strain OS195)</name>
    <dbReference type="NCBI Taxonomy" id="399599"/>
    <lineage>
        <taxon>Bacteria</taxon>
        <taxon>Pseudomonadati</taxon>
        <taxon>Pseudomonadota</taxon>
        <taxon>Gammaproteobacteria</taxon>
        <taxon>Alteromonadales</taxon>
        <taxon>Shewanellaceae</taxon>
        <taxon>Shewanella</taxon>
    </lineage>
</organism>
<reference key="1">
    <citation type="submission" date="2007-11" db="EMBL/GenBank/DDBJ databases">
        <title>Complete sequence of chromosome of Shewanella baltica OS195.</title>
        <authorList>
            <consortium name="US DOE Joint Genome Institute"/>
            <person name="Copeland A."/>
            <person name="Lucas S."/>
            <person name="Lapidus A."/>
            <person name="Barry K."/>
            <person name="Glavina del Rio T."/>
            <person name="Dalin E."/>
            <person name="Tice H."/>
            <person name="Pitluck S."/>
            <person name="Chain P."/>
            <person name="Malfatti S."/>
            <person name="Shin M."/>
            <person name="Vergez L."/>
            <person name="Schmutz J."/>
            <person name="Larimer F."/>
            <person name="Land M."/>
            <person name="Hauser L."/>
            <person name="Kyrpides N."/>
            <person name="Kim E."/>
            <person name="Brettar I."/>
            <person name="Rodrigues J."/>
            <person name="Konstantinidis K."/>
            <person name="Klappenbach J."/>
            <person name="Hofle M."/>
            <person name="Tiedje J."/>
            <person name="Richardson P."/>
        </authorList>
    </citation>
    <scope>NUCLEOTIDE SEQUENCE [LARGE SCALE GENOMIC DNA]</scope>
    <source>
        <strain>OS195</strain>
    </source>
</reference>
<keyword id="KW-0413">Isomerase</keyword>
<keyword id="KW-0663">Pyridoxal phosphate</keyword>
<accession>A9L126</accession>
<name>ALR_SHEB9</name>
<evidence type="ECO:0000255" key="1">
    <source>
        <dbReference type="HAMAP-Rule" id="MF_01201"/>
    </source>
</evidence>
<feature type="chain" id="PRO_1000164612" description="Alanine racemase">
    <location>
        <begin position="1"/>
        <end position="358"/>
    </location>
</feature>
<feature type="active site" description="Proton acceptor; specific for D-alanine" evidence="1">
    <location>
        <position position="35"/>
    </location>
</feature>
<feature type="active site" description="Proton acceptor; specific for L-alanine" evidence="1">
    <location>
        <position position="255"/>
    </location>
</feature>
<feature type="binding site" evidence="1">
    <location>
        <position position="130"/>
    </location>
    <ligand>
        <name>substrate</name>
    </ligand>
</feature>
<feature type="binding site" evidence="1">
    <location>
        <position position="303"/>
    </location>
    <ligand>
        <name>substrate</name>
    </ligand>
</feature>
<feature type="modified residue" description="N6-(pyridoxal phosphate)lysine" evidence="1">
    <location>
        <position position="35"/>
    </location>
</feature>
<dbReference type="EC" id="5.1.1.1" evidence="1"/>
<dbReference type="EMBL" id="CP000891">
    <property type="protein sequence ID" value="ABX47925.1"/>
    <property type="molecule type" value="Genomic_DNA"/>
</dbReference>
<dbReference type="RefSeq" id="WP_006083038.1">
    <property type="nucleotide sequence ID" value="NC_009997.1"/>
</dbReference>
<dbReference type="SMR" id="A9L126"/>
<dbReference type="GeneID" id="11771057"/>
<dbReference type="KEGG" id="sbn:Sbal195_0747"/>
<dbReference type="HOGENOM" id="CLU_028393_1_0_6"/>
<dbReference type="UniPathway" id="UPA00042">
    <property type="reaction ID" value="UER00497"/>
</dbReference>
<dbReference type="Proteomes" id="UP000000770">
    <property type="component" value="Chromosome"/>
</dbReference>
<dbReference type="GO" id="GO:0005829">
    <property type="term" value="C:cytosol"/>
    <property type="evidence" value="ECO:0007669"/>
    <property type="project" value="TreeGrafter"/>
</dbReference>
<dbReference type="GO" id="GO:0008784">
    <property type="term" value="F:alanine racemase activity"/>
    <property type="evidence" value="ECO:0007669"/>
    <property type="project" value="UniProtKB-UniRule"/>
</dbReference>
<dbReference type="GO" id="GO:0030170">
    <property type="term" value="F:pyridoxal phosphate binding"/>
    <property type="evidence" value="ECO:0007669"/>
    <property type="project" value="UniProtKB-UniRule"/>
</dbReference>
<dbReference type="GO" id="GO:0030632">
    <property type="term" value="P:D-alanine biosynthetic process"/>
    <property type="evidence" value="ECO:0007669"/>
    <property type="project" value="UniProtKB-UniRule"/>
</dbReference>
<dbReference type="CDD" id="cd06827">
    <property type="entry name" value="PLPDE_III_AR_proteobact"/>
    <property type="match status" value="1"/>
</dbReference>
<dbReference type="FunFam" id="2.40.37.10:FF:000002">
    <property type="entry name" value="Alanine racemase"/>
    <property type="match status" value="1"/>
</dbReference>
<dbReference type="FunFam" id="3.20.20.10:FF:000002">
    <property type="entry name" value="Alanine racemase"/>
    <property type="match status" value="1"/>
</dbReference>
<dbReference type="Gene3D" id="3.20.20.10">
    <property type="entry name" value="Alanine racemase"/>
    <property type="match status" value="1"/>
</dbReference>
<dbReference type="Gene3D" id="2.40.37.10">
    <property type="entry name" value="Lyase, Ornithine Decarboxylase, Chain A, domain 1"/>
    <property type="match status" value="1"/>
</dbReference>
<dbReference type="HAMAP" id="MF_01201">
    <property type="entry name" value="Ala_racemase"/>
    <property type="match status" value="1"/>
</dbReference>
<dbReference type="InterPro" id="IPR000821">
    <property type="entry name" value="Ala_racemase"/>
</dbReference>
<dbReference type="InterPro" id="IPR009006">
    <property type="entry name" value="Ala_racemase/Decarboxylase_C"/>
</dbReference>
<dbReference type="InterPro" id="IPR011079">
    <property type="entry name" value="Ala_racemase_C"/>
</dbReference>
<dbReference type="InterPro" id="IPR001608">
    <property type="entry name" value="Ala_racemase_N"/>
</dbReference>
<dbReference type="InterPro" id="IPR020622">
    <property type="entry name" value="Ala_racemase_pyridoxalP-BS"/>
</dbReference>
<dbReference type="InterPro" id="IPR029066">
    <property type="entry name" value="PLP-binding_barrel"/>
</dbReference>
<dbReference type="NCBIfam" id="TIGR00492">
    <property type="entry name" value="alr"/>
    <property type="match status" value="1"/>
</dbReference>
<dbReference type="PANTHER" id="PTHR30511">
    <property type="entry name" value="ALANINE RACEMASE"/>
    <property type="match status" value="1"/>
</dbReference>
<dbReference type="PANTHER" id="PTHR30511:SF4">
    <property type="entry name" value="ALANINE RACEMASE, BIOSYNTHETIC"/>
    <property type="match status" value="1"/>
</dbReference>
<dbReference type="Pfam" id="PF00842">
    <property type="entry name" value="Ala_racemase_C"/>
    <property type="match status" value="1"/>
</dbReference>
<dbReference type="Pfam" id="PF01168">
    <property type="entry name" value="Ala_racemase_N"/>
    <property type="match status" value="1"/>
</dbReference>
<dbReference type="PRINTS" id="PR00992">
    <property type="entry name" value="ALARACEMASE"/>
</dbReference>
<dbReference type="SMART" id="SM01005">
    <property type="entry name" value="Ala_racemase_C"/>
    <property type="match status" value="1"/>
</dbReference>
<dbReference type="SUPFAM" id="SSF50621">
    <property type="entry name" value="Alanine racemase C-terminal domain-like"/>
    <property type="match status" value="1"/>
</dbReference>
<dbReference type="SUPFAM" id="SSF51419">
    <property type="entry name" value="PLP-binding barrel"/>
    <property type="match status" value="1"/>
</dbReference>
<dbReference type="PROSITE" id="PS00395">
    <property type="entry name" value="ALANINE_RACEMASE"/>
    <property type="match status" value="1"/>
</dbReference>
<sequence>MNPFPRAEISSSALQTNLAALRQQAPASRVMAVVKANGYGHGLLNVANCLVSADGFGLARLDEALELRAGGVTARLLLLEGFFRATDLPLLVGHDIDTVVHHSSQLEMLEQTVLSKPVTVWLKVDSGMHRLGFTPEQFSTVYDRLMACSNVAKPIHLMTHFACADEPDNTYTSVQMAAFNTLTAGLPGFRTLANSAGALYWPQSQGDWIRPGIALYGVSPVTGDCGANHGLVPAMELVSQLIAVRDHKANQPVGYGCFWTAKQDTRLGVVAIGYGDGYPRNAPEGTPVWVNGRRVPIVGRVSMDMLTVDLGQDAQDKVGDSALLWGKALPVEEVAEHIGTIAYELVTKLTPRVAVCLA</sequence>